<organism>
    <name type="scientific">Podospora anserina</name>
    <name type="common">Pleurage anserina</name>
    <dbReference type="NCBI Taxonomy" id="2587412"/>
    <lineage>
        <taxon>Eukaryota</taxon>
        <taxon>Fungi</taxon>
        <taxon>Dikarya</taxon>
        <taxon>Ascomycota</taxon>
        <taxon>Pezizomycotina</taxon>
        <taxon>Sordariomycetes</taxon>
        <taxon>Sordariomycetidae</taxon>
        <taxon>Sordariales</taxon>
        <taxon>Podosporaceae</taxon>
        <taxon>Podospora</taxon>
    </lineage>
</organism>
<comment type="function">
    <text evidence="2 5">E3 ubiquitin-protein ligase component of a retrotranslocation channel required for peroxisome organization by mediating export of the PEX5 receptor from peroxisomes to the cytosol, thereby promoting PEX5 recycling (By similarity). The retrotranslocation channel is composed of PEX2, PEX10 and PEX12; each subunit contributing transmembrane segments that coassemble into an open channel that specifically allows the passage of PEX5 through the peroxisomal membrane (By similarity). PEX2 also regulates peroxisome organization by acting as a E3 ubiquitin-protein ligase (By similarity). PEX2 ubiquitinates PEX5 during its passage through the retrotranslocation channel: catalyzes monoubiquitination of PEX5 at 'Cys-6', a modification that acts as a signal for PEX5 extraction into the cytosol (By similarity). Involved in caryogamy (nuclear fusion), a process required for sexual sporulation (PubMed:7600573).</text>
</comment>
<comment type="catalytic activity">
    <reaction evidence="2">
        <text>[E2 ubiquitin-conjugating enzyme]-S-ubiquitinyl-L-cysteine + [acceptor protein]-L-cysteine = [E2 ubiquitin-conjugating enzyme]-L-cysteine + [acceptor protein]-S-ubiquitinyl-L-cysteine.</text>
        <dbReference type="EC" id="2.3.2.36"/>
    </reaction>
</comment>
<comment type="pathway">
    <text evidence="2">Protein modification; protein ubiquitination.</text>
</comment>
<comment type="subunit">
    <text evidence="2">Component of the PEX2-PEX10-PEX12 retrotranslocation channel, composed of PEX2, PEX10 and PEX12.</text>
</comment>
<comment type="subcellular location">
    <subcellularLocation>
        <location evidence="2">Peroxisome membrane</location>
        <topology evidence="3">Multi-pass membrane protein</topology>
    </subcellularLocation>
</comment>
<comment type="domain">
    <text evidence="1">The three subunits of the retrotranslocation channel (PEX2, PEX10 and PEX12) coassemble in the membrane into a channel with an open 10 Angstrom pore. The RING-type zinc-fingers that catalyze PEX5 receptor ubiquitination are positioned above the pore on the cytosolic side of the complex.</text>
</comment>
<comment type="similarity">
    <text evidence="6">Belongs to the pex2/pex10/pex12 family.</text>
</comment>
<keyword id="KW-0472">Membrane</keyword>
<keyword id="KW-0479">Metal-binding</keyword>
<keyword id="KW-0576">Peroxisome</keyword>
<keyword id="KW-0653">Protein transport</keyword>
<keyword id="KW-0808">Transferase</keyword>
<keyword id="KW-0812">Transmembrane</keyword>
<keyword id="KW-1133">Transmembrane helix</keyword>
<keyword id="KW-0813">Transport</keyword>
<keyword id="KW-0833">Ubl conjugation pathway</keyword>
<keyword id="KW-0862">Zinc</keyword>
<keyword id="KW-0863">Zinc-finger</keyword>
<feature type="chain" id="PRO_0000056373" description="Peroxisomal biogenesis factor 2">
    <location>
        <begin position="1"/>
        <end position="554"/>
    </location>
</feature>
<feature type="topological domain" description="Peroxisomal matrix" evidence="1">
    <location>
        <begin position="1"/>
        <end position="115"/>
    </location>
</feature>
<feature type="transmembrane region" description="Helical; Name=TM1" evidence="1">
    <location>
        <begin position="116"/>
        <end position="142"/>
    </location>
</feature>
<feature type="topological domain" description="Cytoplasmic" evidence="1">
    <location>
        <begin position="143"/>
        <end position="154"/>
    </location>
</feature>
<feature type="transmembrane region" description="Helical; Name=TM2" evidence="1">
    <location>
        <begin position="155"/>
        <end position="180"/>
    </location>
</feature>
<feature type="topological domain" description="Peroxisomal matrix" evidence="1">
    <location>
        <begin position="181"/>
        <end position="204"/>
    </location>
</feature>
<feature type="transmembrane region" description="Helical; Name=TM3" evidence="1">
    <location>
        <begin position="205"/>
        <end position="231"/>
    </location>
</feature>
<feature type="topological domain" description="Cytoplasmic" evidence="1">
    <location>
        <begin position="232"/>
        <end position="241"/>
    </location>
</feature>
<feature type="transmembrane region" description="Helical; Name=TM4" evidence="1">
    <location>
        <begin position="242"/>
        <end position="272"/>
    </location>
</feature>
<feature type="topological domain" description="Peroxisomal matrix" evidence="1">
    <location>
        <begin position="273"/>
        <end position="299"/>
    </location>
</feature>
<feature type="transmembrane region" description="Helical; Name=TM5" evidence="1">
    <location>
        <begin position="300"/>
        <end position="323"/>
    </location>
</feature>
<feature type="topological domain" description="Cytoplasmic" evidence="1">
    <location>
        <begin position="324"/>
        <end position="554"/>
    </location>
</feature>
<feature type="zinc finger region" description="RING-type; atypical">
    <location>
        <begin position="366"/>
        <end position="435"/>
    </location>
</feature>
<feature type="region of interest" description="Disordered" evidence="4">
    <location>
        <begin position="1"/>
        <end position="63"/>
    </location>
</feature>
<feature type="region of interest" description="Disordered" evidence="4">
    <location>
        <begin position="470"/>
        <end position="554"/>
    </location>
</feature>
<feature type="compositionally biased region" description="Low complexity" evidence="4">
    <location>
        <begin position="9"/>
        <end position="38"/>
    </location>
</feature>
<feature type="compositionally biased region" description="Acidic residues" evidence="4">
    <location>
        <begin position="485"/>
        <end position="508"/>
    </location>
</feature>
<feature type="compositionally biased region" description="Basic and acidic residues" evidence="4">
    <location>
        <begin position="509"/>
        <end position="520"/>
    </location>
</feature>
<feature type="compositionally biased region" description="Acidic residues" evidence="4">
    <location>
        <begin position="521"/>
        <end position="554"/>
    </location>
</feature>
<feature type="binding site" evidence="1">
    <location>
        <position position="366"/>
    </location>
    <ligand>
        <name>Zn(2+)</name>
        <dbReference type="ChEBI" id="CHEBI:29105"/>
        <label>1</label>
    </ligand>
</feature>
<feature type="binding site" evidence="1">
    <location>
        <position position="369"/>
    </location>
    <ligand>
        <name>Zn(2+)</name>
        <dbReference type="ChEBI" id="CHEBI:29105"/>
        <label>1</label>
    </ligand>
</feature>
<feature type="binding site" evidence="1">
    <location>
        <position position="409"/>
    </location>
    <ligand>
        <name>Zn(2+)</name>
        <dbReference type="ChEBI" id="CHEBI:29105"/>
        <label>2</label>
    </ligand>
</feature>
<feature type="binding site" evidence="1">
    <location>
        <position position="411"/>
    </location>
    <ligand>
        <name>Zn(2+)</name>
        <dbReference type="ChEBI" id="CHEBI:29105"/>
        <label>2</label>
    </ligand>
</feature>
<feature type="binding site" evidence="1">
    <location>
        <position position="414"/>
    </location>
    <ligand>
        <name>Zn(2+)</name>
        <dbReference type="ChEBI" id="CHEBI:29105"/>
        <label>1</label>
    </ligand>
</feature>
<feature type="binding site" evidence="1">
    <location>
        <position position="417"/>
    </location>
    <ligand>
        <name>Zn(2+)</name>
        <dbReference type="ChEBI" id="CHEBI:29105"/>
        <label>1</label>
    </ligand>
</feature>
<feature type="binding site" evidence="1">
    <location>
        <position position="432"/>
    </location>
    <ligand>
        <name>Zn(2+)</name>
        <dbReference type="ChEBI" id="CHEBI:29105"/>
        <label>2</label>
    </ligand>
</feature>
<feature type="binding site" evidence="1">
    <location>
        <position position="435"/>
    </location>
    <ligand>
        <name>Zn(2+)</name>
        <dbReference type="ChEBI" id="CHEBI:29105"/>
        <label>2</label>
    </ligand>
</feature>
<protein>
    <recommendedName>
        <fullName>Peroxisomal biogenesis factor 2</fullName>
        <ecNumber evidence="2">2.3.2.36</ecNumber>
    </recommendedName>
    <alternativeName>
        <fullName>Peroxin-2</fullName>
    </alternativeName>
    <alternativeName>
        <fullName>Peroxisomal protein CAR1</fullName>
    </alternativeName>
</protein>
<gene>
    <name type="primary">PEX2</name>
    <name type="synonym">CAR1</name>
</gene>
<accession>P51021</accession>
<proteinExistence type="inferred from homology"/>
<evidence type="ECO:0000250" key="1">
    <source>
        <dbReference type="UniProtKB" id="G2Q1C9"/>
    </source>
</evidence>
<evidence type="ECO:0000250" key="2">
    <source>
        <dbReference type="UniProtKB" id="P32800"/>
    </source>
</evidence>
<evidence type="ECO:0000255" key="3"/>
<evidence type="ECO:0000256" key="4">
    <source>
        <dbReference type="SAM" id="MobiDB-lite"/>
    </source>
</evidence>
<evidence type="ECO:0000269" key="5">
    <source>
    </source>
</evidence>
<evidence type="ECO:0000305" key="6"/>
<reference key="1">
    <citation type="journal article" date="1995" name="Cell">
        <title>A nonmammalian homolog of the PAF1 gene (Zellweger syndrome) discovered as a gene involved in caryogamy in the fungus Podospora anserina.</title>
        <authorList>
            <person name="Berteaux-Lecellier V."/>
            <person name="Picard M."/>
            <person name="Thomson-Coffe C."/>
            <person name="Zickler D."/>
            <person name="Panvier-Adoutte A."/>
            <person name="Simonet J.-M."/>
        </authorList>
    </citation>
    <scope>NUCLEOTIDE SEQUENCE [GENOMIC DNA]</scope>
    <scope>FUNCTION</scope>
    <source>
        <strain>s</strain>
    </source>
</reference>
<sequence length="554" mass="61534">MSDSKPPKDSSSPSAAVPDVAAAAASSTPTPAPVAITPPSNPQSAHSFAQAQQRLIARRQTRDAQEAARVAAQQSESQLRARIAASQSPLLRRLGASTLSLWDTISSREGTRPAFRVGQVDAELLDEELVELMKGQVGEAVRYYGGGGGGDNNIKHEWDAEISLALRAVIFKLTIWDHDATYGAALQNLKYTDARHTGSVLVPPSKWQKGLYGLMTVGGRYMWSKWENWLREQDGGYDEPSPTVQRLSSMTDRLSTLHAAASFASFLVFLLQGRYRTLLDRVLRMRLAPPTSQVSREVSFEYLNRQLVWHAFTEFLLFVLPLVGINRWRRWLARTWRKTKKIMSTTGGEGAEEKKGEFAFLPERTCAICYQDQNQATNENELMAAATSKTGVVGSAQTDVTNPYETIPCGCVYCFVCLATRIEREEGEGWNCLRCGELVKECKPWSGDVLEHESKSPAQKTVVFADDVKDASDDEQENSQVLVQQEDDDEYPEEEGEEGGEEEEEEEEGSRSLEDLRTESASEESSEQEADSEGDESEDYEAEEEELGADLDED</sequence>
<dbReference type="EC" id="2.3.2.36" evidence="2"/>
<dbReference type="EMBL" id="X87329">
    <property type="protein sequence ID" value="CAA60739.1"/>
    <property type="molecule type" value="Genomic_DNA"/>
</dbReference>
<dbReference type="PIR" id="A56730">
    <property type="entry name" value="A56730"/>
</dbReference>
<dbReference type="SMR" id="P51021"/>
<dbReference type="VEuPathDB" id="FungiDB:PODANS_1_2750"/>
<dbReference type="UniPathway" id="UPA00143"/>
<dbReference type="GO" id="GO:0005778">
    <property type="term" value="C:peroxisomal membrane"/>
    <property type="evidence" value="ECO:0007669"/>
    <property type="project" value="UniProtKB-SubCell"/>
</dbReference>
<dbReference type="GO" id="GO:0016740">
    <property type="term" value="F:transferase activity"/>
    <property type="evidence" value="ECO:0007669"/>
    <property type="project" value="UniProtKB-KW"/>
</dbReference>
<dbReference type="GO" id="GO:0008270">
    <property type="term" value="F:zinc ion binding"/>
    <property type="evidence" value="ECO:0007669"/>
    <property type="project" value="UniProtKB-KW"/>
</dbReference>
<dbReference type="GO" id="GO:0016562">
    <property type="term" value="P:protein import into peroxisome matrix, receptor recycling"/>
    <property type="evidence" value="ECO:0007669"/>
    <property type="project" value="UniProtKB-ARBA"/>
</dbReference>
<dbReference type="GO" id="GO:0016567">
    <property type="term" value="P:protein ubiquitination"/>
    <property type="evidence" value="ECO:0007669"/>
    <property type="project" value="UniProtKB-UniPathway"/>
</dbReference>
<dbReference type="InterPro" id="IPR025654">
    <property type="entry name" value="PEX2/10"/>
</dbReference>
<dbReference type="InterPro" id="IPR006845">
    <property type="entry name" value="Pex_N"/>
</dbReference>
<dbReference type="PANTHER" id="PTHR23350">
    <property type="entry name" value="PEROXISOME ASSEMBLY PROTEIN 10"/>
    <property type="match status" value="1"/>
</dbReference>
<dbReference type="PANTHER" id="PTHR23350:SF4">
    <property type="entry name" value="PEROXISOME BIOGENESIS FACTOR 2"/>
    <property type="match status" value="1"/>
</dbReference>
<dbReference type="Pfam" id="PF04757">
    <property type="entry name" value="Pex2_Pex12"/>
    <property type="match status" value="1"/>
</dbReference>
<name>PEX2_PODAS</name>